<name>ILVC_KOCRD</name>
<protein>
    <recommendedName>
        <fullName evidence="1">Ketol-acid reductoisomerase (NADP(+))</fullName>
        <shortName evidence="1">KARI</shortName>
        <ecNumber evidence="1">1.1.1.86</ecNumber>
    </recommendedName>
    <alternativeName>
        <fullName evidence="1">Acetohydroxy-acid isomeroreductase</fullName>
        <shortName evidence="1">AHIR</shortName>
    </alternativeName>
    <alternativeName>
        <fullName evidence="1">Alpha-keto-beta-hydroxylacyl reductoisomerase</fullName>
    </alternativeName>
    <alternativeName>
        <fullName evidence="1">Ketol-acid reductoisomerase type 1</fullName>
    </alternativeName>
    <alternativeName>
        <fullName evidence="1">Ketol-acid reductoisomerase type I</fullName>
    </alternativeName>
</protein>
<sequence>MAKIYYNDDADLSIIQNRSVAIIGYGSQGHAHALNLRDSGVDVRIGLNEGSKSRAKAEAEGLQVMSIAEAAKEADVIMILTPDQVQAQVYEESIKDNLEEGDAIFFAHGFNIRFGYIEAPQGVDVAMVAPKGPGHTVRREFEAGRGVPDLVAVEVDASGNALQLALSYAKGIGGTRAGVIETTFTEETESDLFGEQAVLCGGMSHLVQYGFEVLTEAGYQPEIAYFEVLHELKLIVDLMVEGGIAKQRWSISDTAEYGDYVSGPRVIDPSVKERMQDVLKDIQEGVFADRFMKDQASGAKEFKELRAKEEKHPIETTGRKLRSLFAWEQTDADYTEGTAAR</sequence>
<dbReference type="EC" id="1.1.1.86" evidence="1"/>
<dbReference type="EMBL" id="AP009152">
    <property type="protein sequence ID" value="BAG29370.1"/>
    <property type="molecule type" value="Genomic_DNA"/>
</dbReference>
<dbReference type="RefSeq" id="WP_012398091.1">
    <property type="nucleotide sequence ID" value="NC_010617.1"/>
</dbReference>
<dbReference type="SMR" id="B2GFJ7"/>
<dbReference type="STRING" id="378753.KRH_10230"/>
<dbReference type="KEGG" id="krh:KRH_10230"/>
<dbReference type="eggNOG" id="COG0059">
    <property type="taxonomic scope" value="Bacteria"/>
</dbReference>
<dbReference type="HOGENOM" id="CLU_033821_0_1_11"/>
<dbReference type="OrthoDB" id="9804088at2"/>
<dbReference type="UniPathway" id="UPA00047">
    <property type="reaction ID" value="UER00056"/>
</dbReference>
<dbReference type="UniPathway" id="UPA00049">
    <property type="reaction ID" value="UER00060"/>
</dbReference>
<dbReference type="Proteomes" id="UP000008838">
    <property type="component" value="Chromosome"/>
</dbReference>
<dbReference type="GO" id="GO:0005829">
    <property type="term" value="C:cytosol"/>
    <property type="evidence" value="ECO:0007669"/>
    <property type="project" value="TreeGrafter"/>
</dbReference>
<dbReference type="GO" id="GO:0004455">
    <property type="term" value="F:ketol-acid reductoisomerase activity"/>
    <property type="evidence" value="ECO:0007669"/>
    <property type="project" value="UniProtKB-UniRule"/>
</dbReference>
<dbReference type="GO" id="GO:0000287">
    <property type="term" value="F:magnesium ion binding"/>
    <property type="evidence" value="ECO:0007669"/>
    <property type="project" value="UniProtKB-UniRule"/>
</dbReference>
<dbReference type="GO" id="GO:0050661">
    <property type="term" value="F:NADP binding"/>
    <property type="evidence" value="ECO:0007669"/>
    <property type="project" value="InterPro"/>
</dbReference>
<dbReference type="GO" id="GO:0009097">
    <property type="term" value="P:isoleucine biosynthetic process"/>
    <property type="evidence" value="ECO:0007669"/>
    <property type="project" value="UniProtKB-UniRule"/>
</dbReference>
<dbReference type="GO" id="GO:0009099">
    <property type="term" value="P:L-valine biosynthetic process"/>
    <property type="evidence" value="ECO:0007669"/>
    <property type="project" value="UniProtKB-UniRule"/>
</dbReference>
<dbReference type="FunFam" id="3.40.50.720:FF:000023">
    <property type="entry name" value="Ketol-acid reductoisomerase (NADP(+))"/>
    <property type="match status" value="1"/>
</dbReference>
<dbReference type="Gene3D" id="6.10.240.10">
    <property type="match status" value="1"/>
</dbReference>
<dbReference type="Gene3D" id="3.40.50.720">
    <property type="entry name" value="NAD(P)-binding Rossmann-like Domain"/>
    <property type="match status" value="1"/>
</dbReference>
<dbReference type="HAMAP" id="MF_00435">
    <property type="entry name" value="IlvC"/>
    <property type="match status" value="1"/>
</dbReference>
<dbReference type="InterPro" id="IPR008927">
    <property type="entry name" value="6-PGluconate_DH-like_C_sf"/>
</dbReference>
<dbReference type="InterPro" id="IPR013023">
    <property type="entry name" value="KARI"/>
</dbReference>
<dbReference type="InterPro" id="IPR000506">
    <property type="entry name" value="KARI_C"/>
</dbReference>
<dbReference type="InterPro" id="IPR013116">
    <property type="entry name" value="KARI_N"/>
</dbReference>
<dbReference type="InterPro" id="IPR014359">
    <property type="entry name" value="KARI_prok"/>
</dbReference>
<dbReference type="InterPro" id="IPR036291">
    <property type="entry name" value="NAD(P)-bd_dom_sf"/>
</dbReference>
<dbReference type="NCBIfam" id="TIGR00465">
    <property type="entry name" value="ilvC"/>
    <property type="match status" value="1"/>
</dbReference>
<dbReference type="NCBIfam" id="NF004017">
    <property type="entry name" value="PRK05479.1"/>
    <property type="match status" value="1"/>
</dbReference>
<dbReference type="NCBIfam" id="NF009940">
    <property type="entry name" value="PRK13403.1"/>
    <property type="match status" value="1"/>
</dbReference>
<dbReference type="PANTHER" id="PTHR21371">
    <property type="entry name" value="KETOL-ACID REDUCTOISOMERASE, MITOCHONDRIAL"/>
    <property type="match status" value="1"/>
</dbReference>
<dbReference type="PANTHER" id="PTHR21371:SF1">
    <property type="entry name" value="KETOL-ACID REDUCTOISOMERASE, MITOCHONDRIAL"/>
    <property type="match status" value="1"/>
</dbReference>
<dbReference type="Pfam" id="PF01450">
    <property type="entry name" value="KARI_C"/>
    <property type="match status" value="1"/>
</dbReference>
<dbReference type="Pfam" id="PF07991">
    <property type="entry name" value="KARI_N"/>
    <property type="match status" value="1"/>
</dbReference>
<dbReference type="PIRSF" id="PIRSF000116">
    <property type="entry name" value="IlvC_gammaproteo"/>
    <property type="match status" value="1"/>
</dbReference>
<dbReference type="SUPFAM" id="SSF48179">
    <property type="entry name" value="6-phosphogluconate dehydrogenase C-terminal domain-like"/>
    <property type="match status" value="1"/>
</dbReference>
<dbReference type="SUPFAM" id="SSF51735">
    <property type="entry name" value="NAD(P)-binding Rossmann-fold domains"/>
    <property type="match status" value="1"/>
</dbReference>
<dbReference type="PROSITE" id="PS51851">
    <property type="entry name" value="KARI_C"/>
    <property type="match status" value="1"/>
</dbReference>
<dbReference type="PROSITE" id="PS51850">
    <property type="entry name" value="KARI_N"/>
    <property type="match status" value="1"/>
</dbReference>
<evidence type="ECO:0000255" key="1">
    <source>
        <dbReference type="HAMAP-Rule" id="MF_00435"/>
    </source>
</evidence>
<evidence type="ECO:0000255" key="2">
    <source>
        <dbReference type="PROSITE-ProRule" id="PRU01197"/>
    </source>
</evidence>
<evidence type="ECO:0000255" key="3">
    <source>
        <dbReference type="PROSITE-ProRule" id="PRU01198"/>
    </source>
</evidence>
<organism>
    <name type="scientific">Kocuria rhizophila (strain ATCC 9341 / DSM 348 / NBRC 103217 / DC2201)</name>
    <dbReference type="NCBI Taxonomy" id="378753"/>
    <lineage>
        <taxon>Bacteria</taxon>
        <taxon>Bacillati</taxon>
        <taxon>Actinomycetota</taxon>
        <taxon>Actinomycetes</taxon>
        <taxon>Micrococcales</taxon>
        <taxon>Micrococcaceae</taxon>
        <taxon>Kocuria</taxon>
    </lineage>
</organism>
<reference key="1">
    <citation type="journal article" date="2008" name="J. Bacteriol.">
        <title>Complete genome sequence of the soil actinomycete Kocuria rhizophila.</title>
        <authorList>
            <person name="Takarada H."/>
            <person name="Sekine M."/>
            <person name="Kosugi H."/>
            <person name="Matsuo Y."/>
            <person name="Fujisawa T."/>
            <person name="Omata S."/>
            <person name="Kishi E."/>
            <person name="Shimizu A."/>
            <person name="Tsukatani N."/>
            <person name="Tanikawa S."/>
            <person name="Fujita N."/>
            <person name="Harayama S."/>
        </authorList>
    </citation>
    <scope>NUCLEOTIDE SEQUENCE [LARGE SCALE GENOMIC DNA]</scope>
    <source>
        <strain>ATCC 9341 / DSM 348 / NBRC 103217 / DC2201</strain>
    </source>
</reference>
<feature type="chain" id="PRO_1000124301" description="Ketol-acid reductoisomerase (NADP(+))">
    <location>
        <begin position="1"/>
        <end position="341"/>
    </location>
</feature>
<feature type="domain" description="KARI N-terminal Rossmann" evidence="2">
    <location>
        <begin position="2"/>
        <end position="182"/>
    </location>
</feature>
<feature type="domain" description="KARI C-terminal knotted" evidence="3">
    <location>
        <begin position="183"/>
        <end position="328"/>
    </location>
</feature>
<feature type="active site" evidence="1">
    <location>
        <position position="108"/>
    </location>
</feature>
<feature type="binding site" evidence="1">
    <location>
        <begin position="25"/>
        <end position="28"/>
    </location>
    <ligand>
        <name>NADP(+)</name>
        <dbReference type="ChEBI" id="CHEBI:58349"/>
    </ligand>
</feature>
<feature type="binding site" evidence="1">
    <location>
        <position position="51"/>
    </location>
    <ligand>
        <name>NADP(+)</name>
        <dbReference type="ChEBI" id="CHEBI:58349"/>
    </ligand>
</feature>
<feature type="binding site" evidence="1">
    <location>
        <position position="53"/>
    </location>
    <ligand>
        <name>NADP(+)</name>
        <dbReference type="ChEBI" id="CHEBI:58349"/>
    </ligand>
</feature>
<feature type="binding site" evidence="1">
    <location>
        <begin position="83"/>
        <end position="86"/>
    </location>
    <ligand>
        <name>NADP(+)</name>
        <dbReference type="ChEBI" id="CHEBI:58349"/>
    </ligand>
</feature>
<feature type="binding site" evidence="1">
    <location>
        <position position="134"/>
    </location>
    <ligand>
        <name>NADP(+)</name>
        <dbReference type="ChEBI" id="CHEBI:58349"/>
    </ligand>
</feature>
<feature type="binding site" evidence="1">
    <location>
        <position position="191"/>
    </location>
    <ligand>
        <name>Mg(2+)</name>
        <dbReference type="ChEBI" id="CHEBI:18420"/>
        <label>1</label>
    </ligand>
</feature>
<feature type="binding site" evidence="1">
    <location>
        <position position="191"/>
    </location>
    <ligand>
        <name>Mg(2+)</name>
        <dbReference type="ChEBI" id="CHEBI:18420"/>
        <label>2</label>
    </ligand>
</feature>
<feature type="binding site" evidence="1">
    <location>
        <position position="195"/>
    </location>
    <ligand>
        <name>Mg(2+)</name>
        <dbReference type="ChEBI" id="CHEBI:18420"/>
        <label>1</label>
    </ligand>
</feature>
<feature type="binding site" evidence="1">
    <location>
        <position position="227"/>
    </location>
    <ligand>
        <name>Mg(2+)</name>
        <dbReference type="ChEBI" id="CHEBI:18420"/>
        <label>2</label>
    </ligand>
</feature>
<feature type="binding site" evidence="1">
    <location>
        <position position="231"/>
    </location>
    <ligand>
        <name>Mg(2+)</name>
        <dbReference type="ChEBI" id="CHEBI:18420"/>
        <label>2</label>
    </ligand>
</feature>
<feature type="binding site" evidence="1">
    <location>
        <position position="252"/>
    </location>
    <ligand>
        <name>substrate</name>
    </ligand>
</feature>
<keyword id="KW-0028">Amino-acid biosynthesis</keyword>
<keyword id="KW-0100">Branched-chain amino acid biosynthesis</keyword>
<keyword id="KW-0460">Magnesium</keyword>
<keyword id="KW-0479">Metal-binding</keyword>
<keyword id="KW-0521">NADP</keyword>
<keyword id="KW-0560">Oxidoreductase</keyword>
<keyword id="KW-1185">Reference proteome</keyword>
<accession>B2GFJ7</accession>
<proteinExistence type="inferred from homology"/>
<comment type="function">
    <text evidence="1">Involved in the biosynthesis of branched-chain amino acids (BCAA). Catalyzes an alkyl-migration followed by a ketol-acid reduction of (S)-2-acetolactate (S2AL) to yield (R)-2,3-dihydroxy-isovalerate. In the isomerase reaction, S2AL is rearranged via a Mg-dependent methyl migration to produce 3-hydroxy-3-methyl-2-ketobutyrate (HMKB). In the reductase reaction, this 2-ketoacid undergoes a metal-dependent reduction by NADPH to yield (R)-2,3-dihydroxy-isovalerate.</text>
</comment>
<comment type="catalytic activity">
    <reaction evidence="1">
        <text>(2R)-2,3-dihydroxy-3-methylbutanoate + NADP(+) = (2S)-2-acetolactate + NADPH + H(+)</text>
        <dbReference type="Rhea" id="RHEA:22068"/>
        <dbReference type="ChEBI" id="CHEBI:15378"/>
        <dbReference type="ChEBI" id="CHEBI:49072"/>
        <dbReference type="ChEBI" id="CHEBI:57783"/>
        <dbReference type="ChEBI" id="CHEBI:58349"/>
        <dbReference type="ChEBI" id="CHEBI:58476"/>
        <dbReference type="EC" id="1.1.1.86"/>
    </reaction>
</comment>
<comment type="catalytic activity">
    <reaction evidence="1">
        <text>(2R,3R)-2,3-dihydroxy-3-methylpentanoate + NADP(+) = (S)-2-ethyl-2-hydroxy-3-oxobutanoate + NADPH + H(+)</text>
        <dbReference type="Rhea" id="RHEA:13493"/>
        <dbReference type="ChEBI" id="CHEBI:15378"/>
        <dbReference type="ChEBI" id="CHEBI:49256"/>
        <dbReference type="ChEBI" id="CHEBI:49258"/>
        <dbReference type="ChEBI" id="CHEBI:57783"/>
        <dbReference type="ChEBI" id="CHEBI:58349"/>
        <dbReference type="EC" id="1.1.1.86"/>
    </reaction>
</comment>
<comment type="cofactor">
    <cofactor evidence="1">
        <name>Mg(2+)</name>
        <dbReference type="ChEBI" id="CHEBI:18420"/>
    </cofactor>
    <text evidence="1">Binds 2 magnesium ions per subunit.</text>
</comment>
<comment type="pathway">
    <text evidence="1">Amino-acid biosynthesis; L-isoleucine biosynthesis; L-isoleucine from 2-oxobutanoate: step 2/4.</text>
</comment>
<comment type="pathway">
    <text evidence="1">Amino-acid biosynthesis; L-valine biosynthesis; L-valine from pyruvate: step 2/4.</text>
</comment>
<comment type="similarity">
    <text evidence="1">Belongs to the ketol-acid reductoisomerase family.</text>
</comment>
<gene>
    <name evidence="1" type="primary">ilvC</name>
    <name type="ordered locus">KRH_10230</name>
</gene>